<feature type="signal peptide" evidence="1">
    <location>
        <begin position="1" status="less than"/>
        <end position="14"/>
    </location>
</feature>
<feature type="chain" id="PRO_0000019812" description="Proline-rich 33 kDa extensin-related protein">
    <location>
        <begin position="15"/>
        <end position="211"/>
    </location>
</feature>
<feature type="region of interest" description="Disordered" evidence="2">
    <location>
        <begin position="25"/>
        <end position="211"/>
    </location>
</feature>
<feature type="compositionally biased region" description="Pro residues" evidence="2">
    <location>
        <begin position="25"/>
        <end position="59"/>
    </location>
</feature>
<feature type="compositionally biased region" description="Pro residues" evidence="2">
    <location>
        <begin position="82"/>
        <end position="93"/>
    </location>
</feature>
<feature type="compositionally biased region" description="Basic residues" evidence="2">
    <location>
        <begin position="101"/>
        <end position="111"/>
    </location>
</feature>
<feature type="compositionally biased region" description="Basic residues" evidence="2">
    <location>
        <begin position="127"/>
        <end position="139"/>
    </location>
</feature>
<feature type="compositionally biased region" description="Basic and acidic residues" evidence="2">
    <location>
        <begin position="142"/>
        <end position="159"/>
    </location>
</feature>
<feature type="compositionally biased region" description="Basic and acidic residues" evidence="2">
    <location>
        <begin position="167"/>
        <end position="177"/>
    </location>
</feature>
<feature type="compositionally biased region" description="Pro residues" evidence="2">
    <location>
        <begin position="179"/>
        <end position="198"/>
    </location>
</feature>
<feature type="sequence variant">
    <original>T</original>
    <variation>K</variation>
    <location>
        <position position="29"/>
    </location>
</feature>
<feature type="sequence variant">
    <original>V</original>
    <variation>I</variation>
    <location>
        <position position="32"/>
    </location>
</feature>
<feature type="non-terminal residue">
    <location>
        <position position="1"/>
    </location>
</feature>
<name>PRP33_DAUCA</name>
<dbReference type="EMBL" id="M11222">
    <property type="protein sequence ID" value="AAA33138.1"/>
    <property type="molecule type" value="mRNA"/>
</dbReference>
<dbReference type="PIR" id="B23162">
    <property type="entry name" value="B23162"/>
</dbReference>
<dbReference type="GO" id="GO:0005576">
    <property type="term" value="C:extracellular region"/>
    <property type="evidence" value="ECO:0007669"/>
    <property type="project" value="UniProtKB-KW"/>
</dbReference>
<dbReference type="InterPro" id="IPR051308">
    <property type="entry name" value="Proline-rich_CW_protein"/>
</dbReference>
<dbReference type="PANTHER" id="PTHR34629">
    <property type="entry name" value="PROLINE-RICH EXTENSIN-LIKE PROTEIN EPR1"/>
    <property type="match status" value="1"/>
</dbReference>
<dbReference type="PANTHER" id="PTHR34629:SF4">
    <property type="entry name" value="REPETITIVE PROLINE-RICH CELL WALL PROTEIN 3"/>
    <property type="match status" value="1"/>
</dbReference>
<dbReference type="PRINTS" id="PR01217">
    <property type="entry name" value="PRICHEXTENSN"/>
</dbReference>
<keyword id="KW-0134">Cell wall</keyword>
<keyword id="KW-0677">Repeat</keyword>
<keyword id="KW-0964">Secreted</keyword>
<keyword id="KW-0732">Signal</keyword>
<organism>
    <name type="scientific">Daucus carota</name>
    <name type="common">Wild carrot</name>
    <dbReference type="NCBI Taxonomy" id="4039"/>
    <lineage>
        <taxon>Eukaryota</taxon>
        <taxon>Viridiplantae</taxon>
        <taxon>Streptophyta</taxon>
        <taxon>Embryophyta</taxon>
        <taxon>Tracheophyta</taxon>
        <taxon>Spermatophyta</taxon>
        <taxon>Magnoliopsida</taxon>
        <taxon>eudicotyledons</taxon>
        <taxon>Gunneridae</taxon>
        <taxon>Pentapetalae</taxon>
        <taxon>asterids</taxon>
        <taxon>campanulids</taxon>
        <taxon>Apiales</taxon>
        <taxon>Apiaceae</taxon>
        <taxon>Apioideae</taxon>
        <taxon>Scandiceae</taxon>
        <taxon>Daucinae</taxon>
        <taxon>Daucus</taxon>
        <taxon>Daucus sect. Daucus</taxon>
    </lineage>
</organism>
<sequence length="211" mass="23521">AILGVAIFAAPSLADFHSHPPIHKPPVYTPPVHKPPIHKPPVYTPPVHKPPVYTPPVHKPPSEYKPPVEATNSVTEDHYPIHKPPVYKPPVQKPAPEHKPPVHKPPIHKPPVHNTPSVTDDHYPAHPIHKPQPIHRPPVHKPPTEHKPPVHEPATEHKPSPVYQPPKTEKPVPEHKPPHLPPIVVRPPPTHKPNPPYGHHPRHPPVENTGN</sequence>
<comment type="subcellular location">
    <subcellularLocation>
        <location evidence="3">Secreted</location>
        <location evidence="3">Cell wall</location>
    </subcellularLocation>
</comment>
<comment type="similarity">
    <text evidence="3">Belongs to the plant proline-rich protein superfamily. ENOD12 family.</text>
</comment>
<proteinExistence type="evidence at transcript level"/>
<accession>P06600</accession>
<evidence type="ECO:0000255" key="1"/>
<evidence type="ECO:0000256" key="2">
    <source>
        <dbReference type="SAM" id="MobiDB-lite"/>
    </source>
</evidence>
<evidence type="ECO:0000305" key="3"/>
<reference key="1">
    <citation type="journal article" date="1985" name="Proc. Natl. Acad. Sci. U.S.A.">
        <title>Isolation and characterization of cDNA clones for carrot extensin and a proline-rich 33-kDa protein.</title>
        <authorList>
            <person name="Chen J."/>
            <person name="Varner J.E."/>
        </authorList>
    </citation>
    <scope>NUCLEOTIDE SEQUENCE [MRNA]</scope>
</reference>
<protein>
    <recommendedName>
        <fullName>Proline-rich 33 kDa extensin-related protein</fullName>
    </recommendedName>
</protein>